<reference key="1">
    <citation type="journal article" date="2007" name="Am. Fern J.">
        <title>The complete plastid genome sequence of Angiopteris evecta (G. Forst.) Hoffm. (Marattiaceae).</title>
        <authorList>
            <person name="Roper J.M."/>
            <person name="Hansen S.K."/>
            <person name="Wolf P.G."/>
            <person name="Karol K.G."/>
            <person name="Mandoli D.F."/>
            <person name="Everett K.D.E."/>
            <person name="Kuehl J.V."/>
            <person name="Boore J.L."/>
        </authorList>
    </citation>
    <scope>NUCLEOTIDE SEQUENCE [LARGE SCALE GENOMIC DNA]</scope>
</reference>
<proteinExistence type="inferred from homology"/>
<geneLocation type="chloroplast"/>
<evidence type="ECO:0000255" key="1">
    <source>
        <dbReference type="HAMAP-Rule" id="MF_00438"/>
    </source>
</evidence>
<keyword id="KW-0150">Chloroplast</keyword>
<keyword id="KW-0472">Membrane</keyword>
<keyword id="KW-0602">Photosynthesis</keyword>
<keyword id="KW-0604">Photosystem II</keyword>
<keyword id="KW-0934">Plastid</keyword>
<keyword id="KW-0674">Reaction center</keyword>
<keyword id="KW-0793">Thylakoid</keyword>
<keyword id="KW-0812">Transmembrane</keyword>
<keyword id="KW-1133">Transmembrane helix</keyword>
<sequence length="34" mass="3752">MEVNILAFIATALFILIPTAFLLILYVQTAAQNN</sequence>
<accession>A2T327</accession>
<organism>
    <name type="scientific">Angiopteris evecta</name>
    <name type="common">Mule's foot fern</name>
    <name type="synonym">Polypodium evectum</name>
    <dbReference type="NCBI Taxonomy" id="13825"/>
    <lineage>
        <taxon>Eukaryota</taxon>
        <taxon>Viridiplantae</taxon>
        <taxon>Streptophyta</taxon>
        <taxon>Embryophyta</taxon>
        <taxon>Tracheophyta</taxon>
        <taxon>Polypodiopsida</taxon>
        <taxon>Marattiidae</taxon>
        <taxon>Marattiales</taxon>
        <taxon>Marattiaceae</taxon>
        <taxon>Angiopteris</taxon>
    </lineage>
</organism>
<dbReference type="EMBL" id="DQ821119">
    <property type="protein sequence ID" value="ABG79594.1"/>
    <property type="molecule type" value="Genomic_DNA"/>
</dbReference>
<dbReference type="RefSeq" id="YP_001023695.1">
    <property type="nucleotide sequence ID" value="NC_008829.1"/>
</dbReference>
<dbReference type="SMR" id="A2T327"/>
<dbReference type="GeneID" id="4788247"/>
<dbReference type="GO" id="GO:0009535">
    <property type="term" value="C:chloroplast thylakoid membrane"/>
    <property type="evidence" value="ECO:0007669"/>
    <property type="project" value="UniProtKB-SubCell"/>
</dbReference>
<dbReference type="GO" id="GO:0009523">
    <property type="term" value="C:photosystem II"/>
    <property type="evidence" value="ECO:0007669"/>
    <property type="project" value="UniProtKB-KW"/>
</dbReference>
<dbReference type="GO" id="GO:0019684">
    <property type="term" value="P:photosynthesis, light reaction"/>
    <property type="evidence" value="ECO:0007669"/>
    <property type="project" value="InterPro"/>
</dbReference>
<dbReference type="HAMAP" id="MF_00438">
    <property type="entry name" value="PSII_PsbM"/>
    <property type="match status" value="1"/>
</dbReference>
<dbReference type="InterPro" id="IPR007826">
    <property type="entry name" value="PSII_PsbM"/>
</dbReference>
<dbReference type="InterPro" id="IPR037269">
    <property type="entry name" value="PSII_PsbM_sf"/>
</dbReference>
<dbReference type="NCBIfam" id="TIGR03038">
    <property type="entry name" value="PS_II_psbM"/>
    <property type="match status" value="1"/>
</dbReference>
<dbReference type="PANTHER" id="PTHR35774">
    <property type="entry name" value="PHOTOSYSTEM II REACTION CENTER PROTEIN M"/>
    <property type="match status" value="1"/>
</dbReference>
<dbReference type="PANTHER" id="PTHR35774:SF1">
    <property type="entry name" value="PHOTOSYSTEM II REACTION CENTER PROTEIN M"/>
    <property type="match status" value="1"/>
</dbReference>
<dbReference type="Pfam" id="PF05151">
    <property type="entry name" value="PsbM"/>
    <property type="match status" value="1"/>
</dbReference>
<dbReference type="SUPFAM" id="SSF161033">
    <property type="entry name" value="Photosystem II reaction center protein M, PsbM"/>
    <property type="match status" value="1"/>
</dbReference>
<comment type="function">
    <text evidence="1">One of the components of the core complex of photosystem II (PSII). PSII is a light-driven water:plastoquinone oxidoreductase that uses light energy to abstract electrons from H(2)O, generating O(2) and a proton gradient subsequently used for ATP formation. It consists of a core antenna complex that captures photons, and an electron transfer chain that converts photonic excitation into a charge separation. This subunit is found at the monomer-monomer interface.</text>
</comment>
<comment type="subunit">
    <text evidence="1">PSII is composed of 1 copy each of membrane proteins PsbA, PsbB, PsbC, PsbD, PsbE, PsbF, PsbH, PsbI, PsbJ, PsbK, PsbL, PsbM, PsbT, PsbX, PsbY, PsbZ, Psb30/Ycf12, at least 3 peripheral proteins of the oxygen-evolving complex and a large number of cofactors. It forms dimeric complexes.</text>
</comment>
<comment type="subcellular location">
    <subcellularLocation>
        <location evidence="1">Plastid</location>
        <location evidence="1">Chloroplast thylakoid membrane</location>
        <topology evidence="1">Single-pass membrane protein</topology>
    </subcellularLocation>
</comment>
<comment type="similarity">
    <text evidence="1">Belongs to the PsbM family.</text>
</comment>
<name>PSBM_ANGEV</name>
<protein>
    <recommendedName>
        <fullName evidence="1">Photosystem II reaction center protein M</fullName>
        <shortName evidence="1">PSII-M</shortName>
    </recommendedName>
</protein>
<gene>
    <name evidence="1" type="primary">psbM</name>
</gene>
<feature type="chain" id="PRO_0000325718" description="Photosystem II reaction center protein M">
    <location>
        <begin position="1"/>
        <end position="34"/>
    </location>
</feature>
<feature type="transmembrane region" description="Helical" evidence="1">
    <location>
        <begin position="5"/>
        <end position="25"/>
    </location>
</feature>